<feature type="chain" id="PRO_0000315136" description="UDP-N-acetylglucosamine--N-acetylmuramyl-(pentapeptide) pyrophosphoryl-undecaprenol N-acetylglucosamine transferase">
    <location>
        <begin position="1"/>
        <end position="387"/>
    </location>
</feature>
<feature type="region of interest" description="Disordered" evidence="2">
    <location>
        <begin position="1"/>
        <end position="22"/>
    </location>
</feature>
<feature type="binding site" evidence="1">
    <location>
        <begin position="41"/>
        <end position="43"/>
    </location>
    <ligand>
        <name>UDP-N-acetyl-alpha-D-glucosamine</name>
        <dbReference type="ChEBI" id="CHEBI:57705"/>
    </ligand>
</feature>
<feature type="binding site" evidence="1">
    <location>
        <position position="158"/>
    </location>
    <ligand>
        <name>UDP-N-acetyl-alpha-D-glucosamine</name>
        <dbReference type="ChEBI" id="CHEBI:57705"/>
    </ligand>
</feature>
<feature type="binding site" evidence="1">
    <location>
        <position position="194"/>
    </location>
    <ligand>
        <name>UDP-N-acetyl-alpha-D-glucosamine</name>
        <dbReference type="ChEBI" id="CHEBI:57705"/>
    </ligand>
</feature>
<feature type="binding site" evidence="1">
    <location>
        <position position="222"/>
    </location>
    <ligand>
        <name>UDP-N-acetyl-alpha-D-glucosamine</name>
        <dbReference type="ChEBI" id="CHEBI:57705"/>
    </ligand>
</feature>
<feature type="binding site" evidence="1">
    <location>
        <position position="276"/>
    </location>
    <ligand>
        <name>UDP-N-acetyl-alpha-D-glucosamine</name>
        <dbReference type="ChEBI" id="CHEBI:57705"/>
    </ligand>
</feature>
<feature type="binding site" evidence="1">
    <location>
        <position position="321"/>
    </location>
    <ligand>
        <name>UDP-N-acetyl-alpha-D-glucosamine</name>
        <dbReference type="ChEBI" id="CHEBI:57705"/>
    </ligand>
</feature>
<evidence type="ECO:0000255" key="1">
    <source>
        <dbReference type="HAMAP-Rule" id="MF_00033"/>
    </source>
</evidence>
<evidence type="ECO:0000256" key="2">
    <source>
        <dbReference type="SAM" id="MobiDB-lite"/>
    </source>
</evidence>
<reference key="1">
    <citation type="journal article" date="2008" name="Appl. Environ. Microbiol.">
        <title>The genome of Polaromonas sp. strain JS666: insights into the evolution of a hydrocarbon- and xenobiotic-degrading bacterium, and features of relevance to biotechnology.</title>
        <authorList>
            <person name="Mattes T.E."/>
            <person name="Alexander A.K."/>
            <person name="Richardson P.M."/>
            <person name="Munk A.C."/>
            <person name="Han C.S."/>
            <person name="Stothard P."/>
            <person name="Coleman N.V."/>
        </authorList>
    </citation>
    <scope>NUCLEOTIDE SEQUENCE [LARGE SCALE GENOMIC DNA]</scope>
    <source>
        <strain>JS666 / ATCC BAA-500</strain>
    </source>
</reference>
<protein>
    <recommendedName>
        <fullName evidence="1">UDP-N-acetylglucosamine--N-acetylmuramyl-(pentapeptide) pyrophosphoryl-undecaprenol N-acetylglucosamine transferase</fullName>
        <ecNumber evidence="1">2.4.1.227</ecNumber>
    </recommendedName>
    <alternativeName>
        <fullName evidence="1">Undecaprenyl-PP-MurNAc-pentapeptide-UDPGlcNAc GlcNAc transferase</fullName>
    </alternativeName>
</protein>
<name>MURG_POLSJ</name>
<accession>Q12EL5</accession>
<comment type="function">
    <text evidence="1">Cell wall formation. Catalyzes the transfer of a GlcNAc subunit on undecaprenyl-pyrophosphoryl-MurNAc-pentapeptide (lipid intermediate I) to form undecaprenyl-pyrophosphoryl-MurNAc-(pentapeptide)GlcNAc (lipid intermediate II).</text>
</comment>
<comment type="catalytic activity">
    <reaction evidence="1">
        <text>di-trans,octa-cis-undecaprenyl diphospho-N-acetyl-alpha-D-muramoyl-L-alanyl-D-glutamyl-meso-2,6-diaminopimeloyl-D-alanyl-D-alanine + UDP-N-acetyl-alpha-D-glucosamine = di-trans,octa-cis-undecaprenyl diphospho-[N-acetyl-alpha-D-glucosaminyl-(1-&gt;4)]-N-acetyl-alpha-D-muramoyl-L-alanyl-D-glutamyl-meso-2,6-diaminopimeloyl-D-alanyl-D-alanine + UDP + H(+)</text>
        <dbReference type="Rhea" id="RHEA:31227"/>
        <dbReference type="ChEBI" id="CHEBI:15378"/>
        <dbReference type="ChEBI" id="CHEBI:57705"/>
        <dbReference type="ChEBI" id="CHEBI:58223"/>
        <dbReference type="ChEBI" id="CHEBI:61387"/>
        <dbReference type="ChEBI" id="CHEBI:61388"/>
        <dbReference type="EC" id="2.4.1.227"/>
    </reaction>
</comment>
<comment type="pathway">
    <text evidence="1">Cell wall biogenesis; peptidoglycan biosynthesis.</text>
</comment>
<comment type="subcellular location">
    <subcellularLocation>
        <location evidence="1">Cell inner membrane</location>
        <topology evidence="1">Peripheral membrane protein</topology>
        <orientation evidence="1">Cytoplasmic side</orientation>
    </subcellularLocation>
</comment>
<comment type="similarity">
    <text evidence="1">Belongs to the glycosyltransferase 28 family. MurG subfamily.</text>
</comment>
<organism>
    <name type="scientific">Polaromonas sp. (strain JS666 / ATCC BAA-500)</name>
    <dbReference type="NCBI Taxonomy" id="296591"/>
    <lineage>
        <taxon>Bacteria</taxon>
        <taxon>Pseudomonadati</taxon>
        <taxon>Pseudomonadota</taxon>
        <taxon>Betaproteobacteria</taxon>
        <taxon>Burkholderiales</taxon>
        <taxon>Comamonadaceae</taxon>
        <taxon>Polaromonas</taxon>
    </lineage>
</organism>
<keyword id="KW-0131">Cell cycle</keyword>
<keyword id="KW-0132">Cell division</keyword>
<keyword id="KW-0997">Cell inner membrane</keyword>
<keyword id="KW-1003">Cell membrane</keyword>
<keyword id="KW-0133">Cell shape</keyword>
<keyword id="KW-0961">Cell wall biogenesis/degradation</keyword>
<keyword id="KW-0328">Glycosyltransferase</keyword>
<keyword id="KW-0472">Membrane</keyword>
<keyword id="KW-0573">Peptidoglycan synthesis</keyword>
<keyword id="KW-1185">Reference proteome</keyword>
<keyword id="KW-0808">Transferase</keyword>
<sequence>MSEHVRSAGPPQASTAPSGGSAVHEVTSVGARVALVMAGGTGGHIFPGLAVAEALRERGWRVHWLGGRGNAGHPSMESQLVPPRGFAFESIDFSGVRGKGPLTLVFLPLRLLKAFWQSIQVVRRVKPDVVVGLGGYIAFPAGMMSVLLGKPLVLHEQNSVAGMVNKVLAGVADRVFTAFPGVFRKAEWIGNPLRPAFIRQPDPATRFAGRAGPLKLLVVGGSLGAKALNELVPRALALMPPAQRPDVTHQSGIRQIDELRANYAAAGVQAELTPFIEDTAQAFADADLIICRAGASTVTEIAAVGAAALFVPFPSAVDDHQTTNARFLVDQGGGWLLQQRDMSAAALADMLQKTDRSALLQCALKAKTMQKTDATTRVVAACEELAR</sequence>
<proteinExistence type="inferred from homology"/>
<gene>
    <name evidence="1" type="primary">murG</name>
    <name type="ordered locus">Bpro_1075</name>
</gene>
<dbReference type="EC" id="2.4.1.227" evidence="1"/>
<dbReference type="EMBL" id="CP000316">
    <property type="protein sequence ID" value="ABE43027.1"/>
    <property type="molecule type" value="Genomic_DNA"/>
</dbReference>
<dbReference type="SMR" id="Q12EL5"/>
<dbReference type="STRING" id="296591.Bpro_1075"/>
<dbReference type="CAZy" id="GT28">
    <property type="family name" value="Glycosyltransferase Family 28"/>
</dbReference>
<dbReference type="KEGG" id="pol:Bpro_1075"/>
<dbReference type="eggNOG" id="COG0707">
    <property type="taxonomic scope" value="Bacteria"/>
</dbReference>
<dbReference type="HOGENOM" id="CLU_037404_2_0_4"/>
<dbReference type="UniPathway" id="UPA00219"/>
<dbReference type="Proteomes" id="UP000001983">
    <property type="component" value="Chromosome"/>
</dbReference>
<dbReference type="GO" id="GO:0005886">
    <property type="term" value="C:plasma membrane"/>
    <property type="evidence" value="ECO:0007669"/>
    <property type="project" value="UniProtKB-SubCell"/>
</dbReference>
<dbReference type="GO" id="GO:0051991">
    <property type="term" value="F:UDP-N-acetyl-D-glucosamine:N-acetylmuramoyl-L-alanyl-D-glutamyl-meso-2,6-diaminopimelyl-D-alanyl-D-alanine-diphosphoundecaprenol 4-beta-N-acetylglucosaminlytransferase activity"/>
    <property type="evidence" value="ECO:0007669"/>
    <property type="project" value="RHEA"/>
</dbReference>
<dbReference type="GO" id="GO:0050511">
    <property type="term" value="F:undecaprenyldiphospho-muramoylpentapeptide beta-N-acetylglucosaminyltransferase activity"/>
    <property type="evidence" value="ECO:0007669"/>
    <property type="project" value="UniProtKB-UniRule"/>
</dbReference>
<dbReference type="GO" id="GO:0005975">
    <property type="term" value="P:carbohydrate metabolic process"/>
    <property type="evidence" value="ECO:0007669"/>
    <property type="project" value="InterPro"/>
</dbReference>
<dbReference type="GO" id="GO:0051301">
    <property type="term" value="P:cell division"/>
    <property type="evidence" value="ECO:0007669"/>
    <property type="project" value="UniProtKB-KW"/>
</dbReference>
<dbReference type="GO" id="GO:0071555">
    <property type="term" value="P:cell wall organization"/>
    <property type="evidence" value="ECO:0007669"/>
    <property type="project" value="UniProtKB-KW"/>
</dbReference>
<dbReference type="GO" id="GO:0030259">
    <property type="term" value="P:lipid glycosylation"/>
    <property type="evidence" value="ECO:0007669"/>
    <property type="project" value="UniProtKB-UniRule"/>
</dbReference>
<dbReference type="GO" id="GO:0009252">
    <property type="term" value="P:peptidoglycan biosynthetic process"/>
    <property type="evidence" value="ECO:0007669"/>
    <property type="project" value="UniProtKB-UniRule"/>
</dbReference>
<dbReference type="GO" id="GO:0008360">
    <property type="term" value="P:regulation of cell shape"/>
    <property type="evidence" value="ECO:0007669"/>
    <property type="project" value="UniProtKB-KW"/>
</dbReference>
<dbReference type="CDD" id="cd03785">
    <property type="entry name" value="GT28_MurG"/>
    <property type="match status" value="1"/>
</dbReference>
<dbReference type="Gene3D" id="3.40.50.2000">
    <property type="entry name" value="Glycogen Phosphorylase B"/>
    <property type="match status" value="2"/>
</dbReference>
<dbReference type="HAMAP" id="MF_00033">
    <property type="entry name" value="MurG"/>
    <property type="match status" value="1"/>
</dbReference>
<dbReference type="InterPro" id="IPR006009">
    <property type="entry name" value="GlcNAc_MurG"/>
</dbReference>
<dbReference type="InterPro" id="IPR007235">
    <property type="entry name" value="Glyco_trans_28_C"/>
</dbReference>
<dbReference type="InterPro" id="IPR004276">
    <property type="entry name" value="GlycoTrans_28_N"/>
</dbReference>
<dbReference type="NCBIfam" id="TIGR01133">
    <property type="entry name" value="murG"/>
    <property type="match status" value="1"/>
</dbReference>
<dbReference type="PANTHER" id="PTHR21015:SF22">
    <property type="entry name" value="GLYCOSYLTRANSFERASE"/>
    <property type="match status" value="1"/>
</dbReference>
<dbReference type="PANTHER" id="PTHR21015">
    <property type="entry name" value="UDP-N-ACETYLGLUCOSAMINE--N-ACETYLMURAMYL-(PENTAPEPTIDE) PYROPHOSPHORYL-UNDECAPRENOL N-ACETYLGLUCOSAMINE TRANSFERASE 1"/>
    <property type="match status" value="1"/>
</dbReference>
<dbReference type="Pfam" id="PF04101">
    <property type="entry name" value="Glyco_tran_28_C"/>
    <property type="match status" value="1"/>
</dbReference>
<dbReference type="Pfam" id="PF03033">
    <property type="entry name" value="Glyco_transf_28"/>
    <property type="match status" value="1"/>
</dbReference>
<dbReference type="SUPFAM" id="SSF53756">
    <property type="entry name" value="UDP-Glycosyltransferase/glycogen phosphorylase"/>
    <property type="match status" value="1"/>
</dbReference>